<keyword id="KW-0031">Aminopeptidase</keyword>
<keyword id="KW-0963">Cytoplasm</keyword>
<keyword id="KW-0378">Hydrolase</keyword>
<keyword id="KW-0479">Metal-binding</keyword>
<keyword id="KW-0482">Metalloprotease</keyword>
<keyword id="KW-0645">Protease</keyword>
<keyword id="KW-0862">Zinc</keyword>
<proteinExistence type="inferred from homology"/>
<comment type="function">
    <text evidence="1">Cleaves the N-terminal amino acid of tripeptides.</text>
</comment>
<comment type="catalytic activity">
    <reaction evidence="1">
        <text>Release of the N-terminal residue from a tripeptide.</text>
        <dbReference type="EC" id="3.4.11.4"/>
    </reaction>
</comment>
<comment type="cofactor">
    <cofactor evidence="1">
        <name>Zn(2+)</name>
        <dbReference type="ChEBI" id="CHEBI:29105"/>
    </cofactor>
    <text evidence="1">Binds 2 Zn(2+) ions per subunit.</text>
</comment>
<comment type="subcellular location">
    <subcellularLocation>
        <location evidence="1">Cytoplasm</location>
    </subcellularLocation>
</comment>
<comment type="similarity">
    <text evidence="1">Belongs to the peptidase M20B family.</text>
</comment>
<organism>
    <name type="scientific">Escherichia coli (strain SE11)</name>
    <dbReference type="NCBI Taxonomy" id="409438"/>
    <lineage>
        <taxon>Bacteria</taxon>
        <taxon>Pseudomonadati</taxon>
        <taxon>Pseudomonadota</taxon>
        <taxon>Gammaproteobacteria</taxon>
        <taxon>Enterobacterales</taxon>
        <taxon>Enterobacteriaceae</taxon>
        <taxon>Escherichia</taxon>
    </lineage>
</organism>
<gene>
    <name evidence="1" type="primary">pepT</name>
    <name type="ordered locus">ECSE_1193</name>
</gene>
<protein>
    <recommendedName>
        <fullName evidence="1">Peptidase T</fullName>
        <ecNumber evidence="1">3.4.11.4</ecNumber>
    </recommendedName>
    <alternativeName>
        <fullName evidence="1">Aminotripeptidase</fullName>
        <shortName evidence="1">Tripeptidase</shortName>
    </alternativeName>
    <alternativeName>
        <fullName evidence="1">Tripeptide aminopeptidase</fullName>
    </alternativeName>
</protein>
<dbReference type="EC" id="3.4.11.4" evidence="1"/>
<dbReference type="EMBL" id="AP009240">
    <property type="protein sequence ID" value="BAG76717.1"/>
    <property type="molecule type" value="Genomic_DNA"/>
</dbReference>
<dbReference type="RefSeq" id="WP_000359460.1">
    <property type="nucleotide sequence ID" value="NC_011415.1"/>
</dbReference>
<dbReference type="SMR" id="B6I9K6"/>
<dbReference type="MEROPS" id="M20.003"/>
<dbReference type="KEGG" id="ecy:ECSE_1193"/>
<dbReference type="HOGENOM" id="CLU_053676_0_0_6"/>
<dbReference type="Proteomes" id="UP000008199">
    <property type="component" value="Chromosome"/>
</dbReference>
<dbReference type="GO" id="GO:0005829">
    <property type="term" value="C:cytosol"/>
    <property type="evidence" value="ECO:0007669"/>
    <property type="project" value="TreeGrafter"/>
</dbReference>
<dbReference type="GO" id="GO:0008237">
    <property type="term" value="F:metallopeptidase activity"/>
    <property type="evidence" value="ECO:0007669"/>
    <property type="project" value="UniProtKB-KW"/>
</dbReference>
<dbReference type="GO" id="GO:0045148">
    <property type="term" value="F:tripeptide aminopeptidase activity"/>
    <property type="evidence" value="ECO:0007669"/>
    <property type="project" value="UniProtKB-UniRule"/>
</dbReference>
<dbReference type="GO" id="GO:0008270">
    <property type="term" value="F:zinc ion binding"/>
    <property type="evidence" value="ECO:0007669"/>
    <property type="project" value="UniProtKB-UniRule"/>
</dbReference>
<dbReference type="GO" id="GO:0043171">
    <property type="term" value="P:peptide catabolic process"/>
    <property type="evidence" value="ECO:0007669"/>
    <property type="project" value="UniProtKB-UniRule"/>
</dbReference>
<dbReference type="GO" id="GO:0006508">
    <property type="term" value="P:proteolysis"/>
    <property type="evidence" value="ECO:0007669"/>
    <property type="project" value="UniProtKB-UniRule"/>
</dbReference>
<dbReference type="CDD" id="cd03892">
    <property type="entry name" value="M20_peptT"/>
    <property type="match status" value="1"/>
</dbReference>
<dbReference type="FunFam" id="3.30.70.360:FF:000002">
    <property type="entry name" value="Peptidase T"/>
    <property type="match status" value="1"/>
</dbReference>
<dbReference type="Gene3D" id="3.30.70.360">
    <property type="match status" value="1"/>
</dbReference>
<dbReference type="Gene3D" id="3.40.630.10">
    <property type="entry name" value="Zn peptidases"/>
    <property type="match status" value="1"/>
</dbReference>
<dbReference type="HAMAP" id="MF_00550">
    <property type="entry name" value="Aminopeptidase_M20"/>
    <property type="match status" value="1"/>
</dbReference>
<dbReference type="InterPro" id="IPR001261">
    <property type="entry name" value="ArgE/DapE_CS"/>
</dbReference>
<dbReference type="InterPro" id="IPR036264">
    <property type="entry name" value="Bact_exopeptidase_dim_dom"/>
</dbReference>
<dbReference type="InterPro" id="IPR002933">
    <property type="entry name" value="Peptidase_M20"/>
</dbReference>
<dbReference type="InterPro" id="IPR011650">
    <property type="entry name" value="Peptidase_M20_dimer"/>
</dbReference>
<dbReference type="InterPro" id="IPR010161">
    <property type="entry name" value="Peptidase_M20B"/>
</dbReference>
<dbReference type="NCBIfam" id="TIGR01882">
    <property type="entry name" value="peptidase-T"/>
    <property type="match status" value="1"/>
</dbReference>
<dbReference type="NCBIfam" id="NF003976">
    <property type="entry name" value="PRK05469.1"/>
    <property type="match status" value="1"/>
</dbReference>
<dbReference type="NCBIfam" id="NF009920">
    <property type="entry name" value="PRK13381.1"/>
    <property type="match status" value="1"/>
</dbReference>
<dbReference type="PANTHER" id="PTHR42994">
    <property type="entry name" value="PEPTIDASE T"/>
    <property type="match status" value="1"/>
</dbReference>
<dbReference type="PANTHER" id="PTHR42994:SF1">
    <property type="entry name" value="PEPTIDASE T"/>
    <property type="match status" value="1"/>
</dbReference>
<dbReference type="Pfam" id="PF07687">
    <property type="entry name" value="M20_dimer"/>
    <property type="match status" value="1"/>
</dbReference>
<dbReference type="Pfam" id="PF01546">
    <property type="entry name" value="Peptidase_M20"/>
    <property type="match status" value="1"/>
</dbReference>
<dbReference type="PIRSF" id="PIRSF037215">
    <property type="entry name" value="Peptidase_M20B"/>
    <property type="match status" value="1"/>
</dbReference>
<dbReference type="SUPFAM" id="SSF55031">
    <property type="entry name" value="Bacterial exopeptidase dimerisation domain"/>
    <property type="match status" value="1"/>
</dbReference>
<dbReference type="SUPFAM" id="SSF53187">
    <property type="entry name" value="Zn-dependent exopeptidases"/>
    <property type="match status" value="1"/>
</dbReference>
<dbReference type="PROSITE" id="PS00758">
    <property type="entry name" value="ARGE_DAPE_CPG2_1"/>
    <property type="match status" value="1"/>
</dbReference>
<dbReference type="PROSITE" id="PS00759">
    <property type="entry name" value="ARGE_DAPE_CPG2_2"/>
    <property type="match status" value="1"/>
</dbReference>
<accession>B6I9K6</accession>
<evidence type="ECO:0000255" key="1">
    <source>
        <dbReference type="HAMAP-Rule" id="MF_00550"/>
    </source>
</evidence>
<feature type="chain" id="PRO_1000129031" description="Peptidase T">
    <location>
        <begin position="1"/>
        <end position="409"/>
    </location>
</feature>
<feature type="active site" evidence="1">
    <location>
        <position position="80"/>
    </location>
</feature>
<feature type="active site" description="Proton acceptor" evidence="1">
    <location>
        <position position="173"/>
    </location>
</feature>
<feature type="binding site" evidence="1">
    <location>
        <position position="78"/>
    </location>
    <ligand>
        <name>Zn(2+)</name>
        <dbReference type="ChEBI" id="CHEBI:29105"/>
        <label>1</label>
    </ligand>
</feature>
<feature type="binding site" evidence="1">
    <location>
        <position position="140"/>
    </location>
    <ligand>
        <name>Zn(2+)</name>
        <dbReference type="ChEBI" id="CHEBI:29105"/>
        <label>1</label>
    </ligand>
</feature>
<feature type="binding site" evidence="1">
    <location>
        <position position="140"/>
    </location>
    <ligand>
        <name>Zn(2+)</name>
        <dbReference type="ChEBI" id="CHEBI:29105"/>
        <label>2</label>
    </ligand>
</feature>
<feature type="binding site" evidence="1">
    <location>
        <position position="174"/>
    </location>
    <ligand>
        <name>Zn(2+)</name>
        <dbReference type="ChEBI" id="CHEBI:29105"/>
        <label>2</label>
    </ligand>
</feature>
<feature type="binding site" evidence="1">
    <location>
        <position position="196"/>
    </location>
    <ligand>
        <name>Zn(2+)</name>
        <dbReference type="ChEBI" id="CHEBI:29105"/>
        <label>1</label>
    </ligand>
</feature>
<feature type="binding site" evidence="1">
    <location>
        <position position="379"/>
    </location>
    <ligand>
        <name>Zn(2+)</name>
        <dbReference type="ChEBI" id="CHEBI:29105"/>
        <label>2</label>
    </ligand>
</feature>
<sequence length="409" mass="44981">MDKLLERFLNYVSLDTQSKAGVRQVPSTEGQWKLLHLLKEQLEEMGLINVTLSEKGTLMATLPANVPGNIPAIGFISHVDTSPDCSGKNVNPQIVENYRGGDIALGIGDEVLSPVMFPVLHQLLGQTLITTDGKTLLGADDKAGIAEIMTALAVLQQKNIPHGDIRVAFTPDEEVGKGAKHFDVDAFDARWAYTVDGGGVGELEFENFNAASVNIKIVGNNVHPGTAKGVMVNALSLAARIHAEVPADESPEMTEGYEGFYHLASMKGTVDRADMHYIIRDFDRKQFEARKRKMMEIAKKVGKGLHPDCYIELVIEDSYYNMREKVVEHPHIIDIAQQAMRDCDIEPELKPIRGGTDGAQLSFMGLPCPNLFTGGYNYHGKHEFVTLEGMEKAVQVIVRIAELTAQRKS</sequence>
<reference key="1">
    <citation type="journal article" date="2008" name="DNA Res.">
        <title>Complete genome sequence and comparative analysis of the wild-type commensal Escherichia coli strain SE11 isolated from a healthy adult.</title>
        <authorList>
            <person name="Oshima K."/>
            <person name="Toh H."/>
            <person name="Ogura Y."/>
            <person name="Sasamoto H."/>
            <person name="Morita H."/>
            <person name="Park S.-H."/>
            <person name="Ooka T."/>
            <person name="Iyoda S."/>
            <person name="Taylor T.D."/>
            <person name="Hayashi T."/>
            <person name="Itoh K."/>
            <person name="Hattori M."/>
        </authorList>
    </citation>
    <scope>NUCLEOTIDE SEQUENCE [LARGE SCALE GENOMIC DNA]</scope>
    <source>
        <strain>SE11</strain>
    </source>
</reference>
<name>PEPT_ECOSE</name>